<organism>
    <name type="scientific">Gibberella zeae (strain ATCC MYA-4620 / CBS 123657 / FGSC 9075 / NRRL 31084 / PH-1)</name>
    <name type="common">Wheat head blight fungus</name>
    <name type="synonym">Fusarium graminearum</name>
    <dbReference type="NCBI Taxonomy" id="229533"/>
    <lineage>
        <taxon>Eukaryota</taxon>
        <taxon>Fungi</taxon>
        <taxon>Dikarya</taxon>
        <taxon>Ascomycota</taxon>
        <taxon>Pezizomycotina</taxon>
        <taxon>Sordariomycetes</taxon>
        <taxon>Hypocreomycetidae</taxon>
        <taxon>Hypocreales</taxon>
        <taxon>Nectriaceae</taxon>
        <taxon>Fusarium</taxon>
    </lineage>
</organism>
<reference key="1">
    <citation type="journal article" date="2007" name="Science">
        <title>The Fusarium graminearum genome reveals a link between localized polymorphism and pathogen specialization.</title>
        <authorList>
            <person name="Cuomo C.A."/>
            <person name="Gueldener U."/>
            <person name="Xu J.-R."/>
            <person name="Trail F."/>
            <person name="Turgeon B.G."/>
            <person name="Di Pietro A."/>
            <person name="Walton J.D."/>
            <person name="Ma L.-J."/>
            <person name="Baker S.E."/>
            <person name="Rep M."/>
            <person name="Adam G."/>
            <person name="Antoniw J."/>
            <person name="Baldwin T."/>
            <person name="Calvo S.E."/>
            <person name="Chang Y.-L."/>
            <person name="DeCaprio D."/>
            <person name="Gale L.R."/>
            <person name="Gnerre S."/>
            <person name="Goswami R.S."/>
            <person name="Hammond-Kosack K."/>
            <person name="Harris L.J."/>
            <person name="Hilburn K."/>
            <person name="Kennell J.C."/>
            <person name="Kroken S."/>
            <person name="Magnuson J.K."/>
            <person name="Mannhaupt G."/>
            <person name="Mauceli E.W."/>
            <person name="Mewes H.-W."/>
            <person name="Mitterbauer R."/>
            <person name="Muehlbauer G."/>
            <person name="Muensterkoetter M."/>
            <person name="Nelson D."/>
            <person name="O'Donnell K."/>
            <person name="Ouellet T."/>
            <person name="Qi W."/>
            <person name="Quesneville H."/>
            <person name="Roncero M.I.G."/>
            <person name="Seong K.-Y."/>
            <person name="Tetko I.V."/>
            <person name="Urban M."/>
            <person name="Waalwijk C."/>
            <person name="Ward T.J."/>
            <person name="Yao J."/>
            <person name="Birren B.W."/>
            <person name="Kistler H.C."/>
        </authorList>
    </citation>
    <scope>NUCLEOTIDE SEQUENCE [LARGE SCALE GENOMIC DNA]</scope>
    <source>
        <strain>ATCC MYA-4620 / CBS 123657 / FGSC 9075 / NRRL 31084 / PH-1</strain>
    </source>
</reference>
<reference key="2">
    <citation type="journal article" date="2010" name="Nature">
        <title>Comparative genomics reveals mobile pathogenicity chromosomes in Fusarium.</title>
        <authorList>
            <person name="Ma L.-J."/>
            <person name="van der Does H.C."/>
            <person name="Borkovich K.A."/>
            <person name="Coleman J.J."/>
            <person name="Daboussi M.-J."/>
            <person name="Di Pietro A."/>
            <person name="Dufresne M."/>
            <person name="Freitag M."/>
            <person name="Grabherr M."/>
            <person name="Henrissat B."/>
            <person name="Houterman P.M."/>
            <person name="Kang S."/>
            <person name="Shim W.-B."/>
            <person name="Woloshuk C."/>
            <person name="Xie X."/>
            <person name="Xu J.-R."/>
            <person name="Antoniw J."/>
            <person name="Baker S.E."/>
            <person name="Bluhm B.H."/>
            <person name="Breakspear A."/>
            <person name="Brown D.W."/>
            <person name="Butchko R.A.E."/>
            <person name="Chapman S."/>
            <person name="Coulson R."/>
            <person name="Coutinho P.M."/>
            <person name="Danchin E.G.J."/>
            <person name="Diener A."/>
            <person name="Gale L.R."/>
            <person name="Gardiner D.M."/>
            <person name="Goff S."/>
            <person name="Hammond-Kosack K.E."/>
            <person name="Hilburn K."/>
            <person name="Hua-Van A."/>
            <person name="Jonkers W."/>
            <person name="Kazan K."/>
            <person name="Kodira C.D."/>
            <person name="Koehrsen M."/>
            <person name="Kumar L."/>
            <person name="Lee Y.-H."/>
            <person name="Li L."/>
            <person name="Manners J.M."/>
            <person name="Miranda-Saavedra D."/>
            <person name="Mukherjee M."/>
            <person name="Park G."/>
            <person name="Park J."/>
            <person name="Park S.-Y."/>
            <person name="Proctor R.H."/>
            <person name="Regev A."/>
            <person name="Ruiz-Roldan M.C."/>
            <person name="Sain D."/>
            <person name="Sakthikumar S."/>
            <person name="Sykes S."/>
            <person name="Schwartz D.C."/>
            <person name="Turgeon B.G."/>
            <person name="Wapinski I."/>
            <person name="Yoder O."/>
            <person name="Young S."/>
            <person name="Zeng Q."/>
            <person name="Zhou S."/>
            <person name="Galagan J."/>
            <person name="Cuomo C.A."/>
            <person name="Kistler H.C."/>
            <person name="Rep M."/>
        </authorList>
    </citation>
    <scope>GENOME REANNOTATION</scope>
    <source>
        <strain>ATCC MYA-4620 / CBS 123657 / FGSC 9075 / NRRL 31084 / PH-1</strain>
    </source>
</reference>
<reference key="3">
    <citation type="journal article" date="2015" name="BMC Genomics">
        <title>The completed genome sequence of the pathogenic ascomycete fungus Fusarium graminearum.</title>
        <authorList>
            <person name="King R."/>
            <person name="Urban M."/>
            <person name="Hammond-Kosack M.C.U."/>
            <person name="Hassani-Pak K."/>
            <person name="Hammond-Kosack K.E."/>
        </authorList>
    </citation>
    <scope>NUCLEOTIDE SEQUENCE [LARGE SCALE GENOMIC DNA]</scope>
    <source>
        <strain>ATCC MYA-4620 / CBS 123657 / FGSC 9075 / NRRL 31084 / PH-1</strain>
    </source>
</reference>
<reference key="4">
    <citation type="journal article" date="2005" name="Biochem. Biophys. Res. Commun.">
        <title>Cloning and characterization of two endoxylanases from the cereal phytopathogen Fusarium graminearum and their inhibition profile against endoxylanase inhibitors from wheat.</title>
        <authorList>
            <person name="Belien T."/>
            <person name="Van Campenhout S."/>
            <person name="Van Acker M."/>
            <person name="Volckaert G."/>
        </authorList>
    </citation>
    <scope>SUBCELLULAR LOCATION</scope>
    <scope>CATALYTIC ACTIVITY</scope>
    <scope>BIOPHYSICOCHEMICAL PROPERTIES</scope>
    <scope>ACTIVITY REGULATION</scope>
</reference>
<reference key="5">
    <citation type="journal article" date="2006" name="Biochem. Biophys. Res. Commun.">
        <title>Fusarium graminearum on plant cell wall: no fewer than 30 xylanase genes transcribed.</title>
        <authorList>
            <person name="Hatsch D."/>
            <person name="Phalip V."/>
            <person name="Petkovski E."/>
            <person name="Jeltsch J.M."/>
        </authorList>
    </citation>
    <scope>INDUCTION</scope>
</reference>
<reference key="6">
    <citation type="journal article" date="2007" name="Curr. Genet.">
        <title>Xyr1 regulates xylanase but not cellulase formation in the head blight fungus Fusarium graminearum.</title>
        <authorList>
            <person name="Brunner K."/>
            <person name="Lichtenauer A.M."/>
            <person name="Kratochwill K."/>
            <person name="Delic M."/>
            <person name="Mach R.L."/>
        </authorList>
    </citation>
    <scope>INDUCTION</scope>
</reference>
<reference key="7">
    <citation type="journal article" date="2009" name="Enzyme Microb. Technol.">
        <title>Fusarium graminearum xylanases show different functional stabilities, substrate specificities and inhibition sensitivities.</title>
        <authorList>
            <person name="Pollet A."/>
            <person name="Belien T."/>
            <person name="Fierens K."/>
            <person name="Delcour J.A."/>
            <person name="Courtin C.M."/>
        </authorList>
    </citation>
    <scope>FUNCTION</scope>
    <scope>CATALYTIC ACTIVITY</scope>
    <scope>BIOPHYSICOCHEMICAL PROPERTIES</scope>
    <scope>ACTIVITY REGULATION</scope>
</reference>
<reference key="8">
    <citation type="journal article" date="2012" name="J. Agric. Food Chem.">
        <title>Isolation and characterization of two endoxylanases from Fusarium graminearum.</title>
        <authorList>
            <person name="Dong X."/>
            <person name="Meinhardt S.W."/>
            <person name="Schwarz P.B."/>
        </authorList>
    </citation>
    <scope>SUBCELLULAR LOCATION</scope>
    <scope>IDENTIFICATION BY MASS SPECTROMETRY</scope>
    <scope>FUNCTION</scope>
    <scope>CATALYTIC ACTIVITY</scope>
    <scope>BIOPHYSICOCHEMICAL PROPERTIES</scope>
    <scope>ACTIVITY REGULATION</scope>
</reference>
<reference key="9">
    <citation type="journal article" date="2013" name="Plant Physiol. Biochem.">
        <title>A Fusarium graminearum xylanase expressed during wheat infection is a necrotizing factor but is not essential for virulence.</title>
        <authorList>
            <person name="Sella L."/>
            <person name="Gazzetti K."/>
            <person name="Faoro F."/>
            <person name="Odorizzi S."/>
            <person name="D'Ovidio R."/>
            <person name="Schafer W."/>
            <person name="Favaron F."/>
        </authorList>
    </citation>
    <scope>INDUCTION</scope>
    <scope>FUNCTION</scope>
    <scope>DISRUPTION PHENOTYPE</scope>
</reference>
<reference key="10">
    <citation type="journal article" date="2014" name="Phytopathology">
        <title>Fusarium graminearum possesses virulence factors common to Fusarium head blight of wheat and seedling rot of soybean, but differing in their impact on disease severity.</title>
        <authorList>
            <person name="Sella L."/>
            <person name="Gazzetti K.G."/>
            <person name="Castiglioni C."/>
            <person name="Schafer W."/>
            <person name="Favaron F."/>
        </authorList>
    </citation>
    <scope>FUNCTION</scope>
    <scope>DISRUPTION PHENOTYPE</scope>
</reference>
<feature type="signal peptide" evidence="1">
    <location>
        <begin position="1"/>
        <end position="19"/>
    </location>
</feature>
<feature type="chain" id="PRO_0000429610" description="Endo-1,4-beta-xylanase B">
    <location>
        <begin position="20"/>
        <end position="228"/>
    </location>
</feature>
<feature type="domain" description="GH11" evidence="2">
    <location>
        <begin position="37"/>
        <end position="227"/>
    </location>
</feature>
<feature type="active site" description="Nucleophile" evidence="3">
    <location>
        <position position="122"/>
    </location>
</feature>
<feature type="active site" description="Proton donor" evidence="4">
    <location>
        <position position="214"/>
    </location>
</feature>
<evidence type="ECO:0000255" key="1"/>
<evidence type="ECO:0000255" key="2">
    <source>
        <dbReference type="PROSITE-ProRule" id="PRU01097"/>
    </source>
</evidence>
<evidence type="ECO:0000255" key="3">
    <source>
        <dbReference type="PROSITE-ProRule" id="PRU10062"/>
    </source>
</evidence>
<evidence type="ECO:0000255" key="4">
    <source>
        <dbReference type="PROSITE-ProRule" id="PRU10063"/>
    </source>
</evidence>
<evidence type="ECO:0000269" key="5">
    <source>
    </source>
</evidence>
<evidence type="ECO:0000269" key="6">
    <source>
    </source>
</evidence>
<evidence type="ECO:0000269" key="7">
    <source>
    </source>
</evidence>
<evidence type="ECO:0000269" key="8">
    <source>
    </source>
</evidence>
<evidence type="ECO:0000269" key="9">
    <source>
    </source>
</evidence>
<evidence type="ECO:0000269" key="10">
    <source>
    </source>
</evidence>
<evidence type="ECO:0000269" key="11">
    <source ref="7"/>
</evidence>
<evidence type="ECO:0000305" key="12"/>
<gene>
    <name type="primary">XYLB</name>
    <name type="synonym">XYL2</name>
    <name type="ORF">FGRRES_03624</name>
    <name type="ORF">FGSG_03624</name>
</gene>
<protein>
    <recommendedName>
        <fullName>Endo-1,4-beta-xylanase B</fullName>
        <shortName>Xylanase B</shortName>
        <ecNumber>3.2.1.8</ecNumber>
    </recommendedName>
    <alternativeName>
        <fullName>1,4-beta-D-xylan xylanohydrolase B</fullName>
    </alternativeName>
    <alternativeName>
        <fullName>Xylanase 2</fullName>
    </alternativeName>
</protein>
<comment type="function">
    <text evidence="8 9 10 11">Endo-1,4-beta-xylanase involved in the hydrolysis of xylan, a major structural heterogeneous polysaccharide found in plant biomass representing the second most abundant polysaccharide in the biosphere, after cellulose. Plays an important role in causing fusarium head blight (FHB) on cereal crops. Induces cell death and hydrogen peroxide accumulation in infected wheat leaves.</text>
</comment>
<comment type="catalytic activity">
    <reaction evidence="5 8 11">
        <text>Endohydrolysis of (1-&gt;4)-beta-D-xylosidic linkages in xylans.</text>
        <dbReference type="EC" id="3.2.1.8"/>
    </reaction>
</comment>
<comment type="activity regulation">
    <text evidence="5 8 11">Inhibited by the proteinaceous endoxylanase inhibitor I from T.aestivum (TAXI-I).</text>
</comment>
<comment type="biophysicochemical properties">
    <kinetics>
        <KM evidence="5 8 11">6.2 mg/ml for wheat flour arabinoxylan</KM>
        <KM evidence="5 8 11">4.3 mg/ml for soluble oat spelt xylan</KM>
        <KM evidence="5 8 11">11.9 mg/ml for soluble birchwood xylan</KM>
        <Vmax evidence="5 8 11">18.4 umol/min/mg enzyme toward xylan</Vmax>
        <Vmax evidence="5 8 11">61.7 umol/min/mg enzyme toward arabinoxylan</Vmax>
    </kinetics>
    <phDependence>
        <text evidence="5 8 11">Optimum pH is 7.0.</text>
    </phDependence>
    <temperatureDependence>
        <text evidence="5 8 11">Optimum temperature is 40 degrees Celsius.</text>
    </temperatureDependence>
</comment>
<comment type="pathway">
    <text>Glycan degradation; xylan degradation.</text>
</comment>
<comment type="subcellular location">
    <subcellularLocation>
        <location evidence="5 8">Secreted</location>
    </subcellularLocation>
</comment>
<comment type="induction">
    <text evidence="6 7 9">Expression is under the control of transcription factor XYR1 and highly induced during wheat infection and by xylan.</text>
</comment>
<comment type="disruption phenotype">
    <text evidence="9 10">Leads to about 40 percent reduction of xylanase activity when grown in culture with xylan as carbon source.</text>
</comment>
<comment type="similarity">
    <text evidence="12">Belongs to the glycosyl hydrolase 11 (cellulase G) family.</text>
</comment>
<accession>I1RII8</accession>
<accession>A0A0E0S4N8</accession>
<sequence>MVSFTYLLAAVSAVTGAVAAPNPTKVDAQPPSGLLEKRTSPTTGVNNGFYFSFWTDTPSAVTYTNGNGGQFSMNWNGNRGNHVGGKGWNPGAARTIKYSGDYRPNGNSYLAVYGWTRNPLVEYYIVENFGTYNPSSGAQKKGEINIDGSIYDIAVSTRNCAPSIEGDCKTFQQYWSVRRNKRSSGSVNTGAHFNAWAQAGLRLGSHDYQILAVEGYQSSGQATMTVSG</sequence>
<keyword id="KW-0119">Carbohydrate metabolism</keyword>
<keyword id="KW-0326">Glycosidase</keyword>
<keyword id="KW-0378">Hydrolase</keyword>
<keyword id="KW-0624">Polysaccharide degradation</keyword>
<keyword id="KW-1185">Reference proteome</keyword>
<keyword id="KW-0964">Secreted</keyword>
<keyword id="KW-0732">Signal</keyword>
<keyword id="KW-0843">Virulence</keyword>
<keyword id="KW-0858">Xylan degradation</keyword>
<dbReference type="EC" id="3.2.1.8"/>
<dbReference type="EMBL" id="AJ863566">
    <property type="status" value="NOT_ANNOTATED_CDS"/>
    <property type="molecule type" value="Genomic_DNA"/>
</dbReference>
<dbReference type="EMBL" id="AY575961">
    <property type="status" value="NOT_ANNOTATED_CDS"/>
    <property type="molecule type" value="Genomic_DNA"/>
</dbReference>
<dbReference type="EMBL" id="DS231664">
    <property type="protein sequence ID" value="ESU09578.1"/>
    <property type="molecule type" value="Genomic_DNA"/>
</dbReference>
<dbReference type="EMBL" id="HG970333">
    <property type="protein sequence ID" value="CEF78463.1"/>
    <property type="molecule type" value="Genomic_DNA"/>
</dbReference>
<dbReference type="RefSeq" id="XP_011322077.1">
    <property type="nucleotide sequence ID" value="XM_011323775.1"/>
</dbReference>
<dbReference type="SMR" id="I1RII8"/>
<dbReference type="STRING" id="229533.I1RII8"/>
<dbReference type="GeneID" id="23550922"/>
<dbReference type="KEGG" id="fgr:FGSG_03624"/>
<dbReference type="VEuPathDB" id="FungiDB:FGRAMPH1_01G13319"/>
<dbReference type="eggNOG" id="ENOG502RXA7">
    <property type="taxonomic scope" value="Eukaryota"/>
</dbReference>
<dbReference type="HOGENOM" id="CLU_052631_0_0_1"/>
<dbReference type="InParanoid" id="I1RII8"/>
<dbReference type="OrthoDB" id="106801at110618"/>
<dbReference type="UniPathway" id="UPA00114"/>
<dbReference type="PHI-base" id="PHI:11940"/>
<dbReference type="PHI-base" id="PHI:9746"/>
<dbReference type="Proteomes" id="UP000070720">
    <property type="component" value="Chromosome 2"/>
</dbReference>
<dbReference type="GO" id="GO:0005576">
    <property type="term" value="C:extracellular region"/>
    <property type="evidence" value="ECO:0007669"/>
    <property type="project" value="UniProtKB-SubCell"/>
</dbReference>
<dbReference type="GO" id="GO:0031176">
    <property type="term" value="F:endo-1,4-beta-xylanase activity"/>
    <property type="evidence" value="ECO:0007669"/>
    <property type="project" value="UniProtKB-EC"/>
</dbReference>
<dbReference type="GO" id="GO:0045493">
    <property type="term" value="P:xylan catabolic process"/>
    <property type="evidence" value="ECO:0007669"/>
    <property type="project" value="UniProtKB-UniPathway"/>
</dbReference>
<dbReference type="FunFam" id="2.60.120.180:FF:000001">
    <property type="entry name" value="Endo-1,4-beta-xylanase"/>
    <property type="match status" value="1"/>
</dbReference>
<dbReference type="Gene3D" id="2.60.120.180">
    <property type="match status" value="1"/>
</dbReference>
<dbReference type="InterPro" id="IPR013320">
    <property type="entry name" value="ConA-like_dom_sf"/>
</dbReference>
<dbReference type="InterPro" id="IPR013319">
    <property type="entry name" value="GH11/12"/>
</dbReference>
<dbReference type="InterPro" id="IPR018208">
    <property type="entry name" value="GH11_AS_1"/>
</dbReference>
<dbReference type="InterPro" id="IPR033119">
    <property type="entry name" value="GH11_AS_2"/>
</dbReference>
<dbReference type="InterPro" id="IPR033123">
    <property type="entry name" value="GH11_dom"/>
</dbReference>
<dbReference type="InterPro" id="IPR001137">
    <property type="entry name" value="Glyco_hydro_11"/>
</dbReference>
<dbReference type="PANTHER" id="PTHR46828">
    <property type="entry name" value="ENDO-1,4-BETA-XYLANASE A-RELATED"/>
    <property type="match status" value="1"/>
</dbReference>
<dbReference type="PANTHER" id="PTHR46828:SF2">
    <property type="entry name" value="ENDO-1,4-BETA-XYLANASE A-RELATED"/>
    <property type="match status" value="1"/>
</dbReference>
<dbReference type="Pfam" id="PF00457">
    <property type="entry name" value="Glyco_hydro_11"/>
    <property type="match status" value="1"/>
</dbReference>
<dbReference type="PRINTS" id="PR00911">
    <property type="entry name" value="GLHYDRLASE11"/>
</dbReference>
<dbReference type="SUPFAM" id="SSF49899">
    <property type="entry name" value="Concanavalin A-like lectins/glucanases"/>
    <property type="match status" value="1"/>
</dbReference>
<dbReference type="PROSITE" id="PS00776">
    <property type="entry name" value="GH11_1"/>
    <property type="match status" value="1"/>
</dbReference>
<dbReference type="PROSITE" id="PS00777">
    <property type="entry name" value="GH11_2"/>
    <property type="match status" value="1"/>
</dbReference>
<dbReference type="PROSITE" id="PS51761">
    <property type="entry name" value="GH11_3"/>
    <property type="match status" value="1"/>
</dbReference>
<proteinExistence type="evidence at protein level"/>
<name>XYNB_GIBZE</name>